<comment type="function">
    <text evidence="1">An aminoacyl-tRNA editing enzyme that deacylates mischarged D-aminoacyl-tRNAs. Also deacylates mischarged glycyl-tRNA(Ala), protecting cells against glycine mischarging by AlaRS. Acts via tRNA-based rather than protein-based catalysis; rejects L-amino acids rather than detecting D-amino acids in the active site. By recycling D-aminoacyl-tRNA to D-amino acids and free tRNA molecules, this enzyme counteracts the toxicity associated with the formation of D-aminoacyl-tRNA entities in vivo and helps enforce protein L-homochirality.</text>
</comment>
<comment type="catalytic activity">
    <reaction evidence="1">
        <text>glycyl-tRNA(Ala) + H2O = tRNA(Ala) + glycine + H(+)</text>
        <dbReference type="Rhea" id="RHEA:53744"/>
        <dbReference type="Rhea" id="RHEA-COMP:9657"/>
        <dbReference type="Rhea" id="RHEA-COMP:13640"/>
        <dbReference type="ChEBI" id="CHEBI:15377"/>
        <dbReference type="ChEBI" id="CHEBI:15378"/>
        <dbReference type="ChEBI" id="CHEBI:57305"/>
        <dbReference type="ChEBI" id="CHEBI:78442"/>
        <dbReference type="ChEBI" id="CHEBI:78522"/>
        <dbReference type="EC" id="3.1.1.96"/>
    </reaction>
</comment>
<comment type="catalytic activity">
    <reaction evidence="1">
        <text>a D-aminoacyl-tRNA + H2O = a tRNA + a D-alpha-amino acid + H(+)</text>
        <dbReference type="Rhea" id="RHEA:13953"/>
        <dbReference type="Rhea" id="RHEA-COMP:10123"/>
        <dbReference type="Rhea" id="RHEA-COMP:10124"/>
        <dbReference type="ChEBI" id="CHEBI:15377"/>
        <dbReference type="ChEBI" id="CHEBI:15378"/>
        <dbReference type="ChEBI" id="CHEBI:59871"/>
        <dbReference type="ChEBI" id="CHEBI:78442"/>
        <dbReference type="ChEBI" id="CHEBI:79333"/>
        <dbReference type="EC" id="3.1.1.96"/>
    </reaction>
</comment>
<comment type="subunit">
    <text evidence="1">Homodimer.</text>
</comment>
<comment type="subcellular location">
    <subcellularLocation>
        <location evidence="1">Cytoplasm</location>
    </subcellularLocation>
</comment>
<comment type="domain">
    <text evidence="1">A Gly-cisPro motif from one monomer fits into the active site of the other monomer to allow specific chiral rejection of L-amino acids.</text>
</comment>
<comment type="similarity">
    <text evidence="2">Belongs to the DTD family.</text>
</comment>
<evidence type="ECO:0000250" key="1">
    <source>
        <dbReference type="UniProtKB" id="Q8IIS0"/>
    </source>
</evidence>
<evidence type="ECO:0000305" key="2"/>
<dbReference type="EC" id="3.1.1.96" evidence="1"/>
<dbReference type="EMBL" id="CR382124">
    <property type="protein sequence ID" value="CAH00546.1"/>
    <property type="molecule type" value="Genomic_DNA"/>
</dbReference>
<dbReference type="RefSeq" id="XP_453450.1">
    <property type="nucleotide sequence ID" value="XM_453450.1"/>
</dbReference>
<dbReference type="SMR" id="Q6CRI9"/>
<dbReference type="FunCoup" id="Q6CRI9">
    <property type="interactions" value="1653"/>
</dbReference>
<dbReference type="STRING" id="284590.Q6CRI9"/>
<dbReference type="PaxDb" id="284590-Q6CRI9"/>
<dbReference type="KEGG" id="kla:KLLA0_D08690g"/>
<dbReference type="eggNOG" id="KOG3323">
    <property type="taxonomic scope" value="Eukaryota"/>
</dbReference>
<dbReference type="HOGENOM" id="CLU_076901_0_4_1"/>
<dbReference type="InParanoid" id="Q6CRI9"/>
<dbReference type="OMA" id="VFGADMK"/>
<dbReference type="Proteomes" id="UP000000598">
    <property type="component" value="Chromosome D"/>
</dbReference>
<dbReference type="GO" id="GO:0005737">
    <property type="term" value="C:cytoplasm"/>
    <property type="evidence" value="ECO:0007669"/>
    <property type="project" value="UniProtKB-SubCell"/>
</dbReference>
<dbReference type="GO" id="GO:0051500">
    <property type="term" value="F:D-tyrosyl-tRNA(Tyr) deacylase activity"/>
    <property type="evidence" value="ECO:0007669"/>
    <property type="project" value="TreeGrafter"/>
</dbReference>
<dbReference type="GO" id="GO:0000049">
    <property type="term" value="F:tRNA binding"/>
    <property type="evidence" value="ECO:0007669"/>
    <property type="project" value="UniProtKB-KW"/>
</dbReference>
<dbReference type="FunFam" id="3.50.80.10:FF:000001">
    <property type="entry name" value="D-aminoacyl-tRNA deacylase"/>
    <property type="match status" value="1"/>
</dbReference>
<dbReference type="Gene3D" id="3.50.80.10">
    <property type="entry name" value="D-tyrosyl-tRNA(Tyr) deacylase"/>
    <property type="match status" value="1"/>
</dbReference>
<dbReference type="HAMAP" id="MF_00518">
    <property type="entry name" value="Deacylase_Dtd"/>
    <property type="match status" value="1"/>
</dbReference>
<dbReference type="InterPro" id="IPR003732">
    <property type="entry name" value="Daa-tRNA_deacyls_DTD"/>
</dbReference>
<dbReference type="InterPro" id="IPR023509">
    <property type="entry name" value="DTD-like_sf"/>
</dbReference>
<dbReference type="NCBIfam" id="TIGR00256">
    <property type="entry name" value="D-aminoacyl-tRNA deacylase"/>
    <property type="match status" value="1"/>
</dbReference>
<dbReference type="PANTHER" id="PTHR10472:SF5">
    <property type="entry name" value="D-AMINOACYL-TRNA DEACYLASE 1"/>
    <property type="match status" value="1"/>
</dbReference>
<dbReference type="PANTHER" id="PTHR10472">
    <property type="entry name" value="D-TYROSYL-TRNA TYR DEACYLASE"/>
    <property type="match status" value="1"/>
</dbReference>
<dbReference type="Pfam" id="PF02580">
    <property type="entry name" value="Tyr_Deacylase"/>
    <property type="match status" value="1"/>
</dbReference>
<dbReference type="SUPFAM" id="SSF69500">
    <property type="entry name" value="DTD-like"/>
    <property type="match status" value="1"/>
</dbReference>
<gene>
    <name type="primary">DTD1</name>
    <name type="ordered locus">KLLA0D08690g</name>
</gene>
<reference key="1">
    <citation type="journal article" date="2004" name="Nature">
        <title>Genome evolution in yeasts.</title>
        <authorList>
            <person name="Dujon B."/>
            <person name="Sherman D."/>
            <person name="Fischer G."/>
            <person name="Durrens P."/>
            <person name="Casaregola S."/>
            <person name="Lafontaine I."/>
            <person name="de Montigny J."/>
            <person name="Marck C."/>
            <person name="Neuveglise C."/>
            <person name="Talla E."/>
            <person name="Goffard N."/>
            <person name="Frangeul L."/>
            <person name="Aigle M."/>
            <person name="Anthouard V."/>
            <person name="Babour A."/>
            <person name="Barbe V."/>
            <person name="Barnay S."/>
            <person name="Blanchin S."/>
            <person name="Beckerich J.-M."/>
            <person name="Beyne E."/>
            <person name="Bleykasten C."/>
            <person name="Boisrame A."/>
            <person name="Boyer J."/>
            <person name="Cattolico L."/>
            <person name="Confanioleri F."/>
            <person name="de Daruvar A."/>
            <person name="Despons L."/>
            <person name="Fabre E."/>
            <person name="Fairhead C."/>
            <person name="Ferry-Dumazet H."/>
            <person name="Groppi A."/>
            <person name="Hantraye F."/>
            <person name="Hennequin C."/>
            <person name="Jauniaux N."/>
            <person name="Joyet P."/>
            <person name="Kachouri R."/>
            <person name="Kerrest A."/>
            <person name="Koszul R."/>
            <person name="Lemaire M."/>
            <person name="Lesur I."/>
            <person name="Ma L."/>
            <person name="Muller H."/>
            <person name="Nicaud J.-M."/>
            <person name="Nikolski M."/>
            <person name="Oztas S."/>
            <person name="Ozier-Kalogeropoulos O."/>
            <person name="Pellenz S."/>
            <person name="Potier S."/>
            <person name="Richard G.-F."/>
            <person name="Straub M.-L."/>
            <person name="Suleau A."/>
            <person name="Swennen D."/>
            <person name="Tekaia F."/>
            <person name="Wesolowski-Louvel M."/>
            <person name="Westhof E."/>
            <person name="Wirth B."/>
            <person name="Zeniou-Meyer M."/>
            <person name="Zivanovic Y."/>
            <person name="Bolotin-Fukuhara M."/>
            <person name="Thierry A."/>
            <person name="Bouchier C."/>
            <person name="Caudron B."/>
            <person name="Scarpelli C."/>
            <person name="Gaillardin C."/>
            <person name="Weissenbach J."/>
            <person name="Wincker P."/>
            <person name="Souciet J.-L."/>
        </authorList>
    </citation>
    <scope>NUCLEOTIDE SEQUENCE [LARGE SCALE GENOMIC DNA]</scope>
    <source>
        <strain>ATCC 8585 / CBS 2359 / DSM 70799 / NBRC 1267 / NRRL Y-1140 / WM37</strain>
    </source>
</reference>
<proteinExistence type="inferred from homology"/>
<sequence>MRIVLQKVSEASVTVGSAVVSQIKHGYMLLVGIGTDDKLEDIDKLSKKILTFRGFDDDAGYGWKRNISEVDGEILCVSQFTLMARTSKGTKPDFHLAQRGELANELYGQFMDKLKAGLGDDKVQNGVFGAMMSCKLTNEGPVTIIFDSKA</sequence>
<name>DTD_KLULA</name>
<keyword id="KW-0963">Cytoplasm</keyword>
<keyword id="KW-0378">Hydrolase</keyword>
<keyword id="KW-1185">Reference proteome</keyword>
<keyword id="KW-0694">RNA-binding</keyword>
<keyword id="KW-0820">tRNA-binding</keyword>
<organism>
    <name type="scientific">Kluyveromyces lactis (strain ATCC 8585 / CBS 2359 / DSM 70799 / NBRC 1267 / NRRL Y-1140 / WM37)</name>
    <name type="common">Yeast</name>
    <name type="synonym">Candida sphaerica</name>
    <dbReference type="NCBI Taxonomy" id="284590"/>
    <lineage>
        <taxon>Eukaryota</taxon>
        <taxon>Fungi</taxon>
        <taxon>Dikarya</taxon>
        <taxon>Ascomycota</taxon>
        <taxon>Saccharomycotina</taxon>
        <taxon>Saccharomycetes</taxon>
        <taxon>Saccharomycetales</taxon>
        <taxon>Saccharomycetaceae</taxon>
        <taxon>Kluyveromyces</taxon>
    </lineage>
</organism>
<protein>
    <recommendedName>
        <fullName evidence="1">D-aminoacyl-tRNA deacylase</fullName>
        <shortName>DTD</shortName>
        <ecNumber evidence="1">3.1.1.96</ecNumber>
    </recommendedName>
    <alternativeName>
        <fullName evidence="1">Gly-tRNA(Ala) deacylase</fullName>
    </alternativeName>
</protein>
<accession>Q6CRI9</accession>
<feature type="chain" id="PRO_0000164631" description="D-aminoacyl-tRNA deacylase">
    <location>
        <begin position="1"/>
        <end position="150"/>
    </location>
</feature>
<feature type="short sequence motif" description="Gly-cisPro motif, important for rejection of L-amino acids" evidence="1">
    <location>
        <begin position="140"/>
        <end position="141"/>
    </location>
</feature>